<dbReference type="EMBL" id="AF166114">
    <property type="protein sequence ID" value="AAF43790.1"/>
    <property type="molecule type" value="Genomic_DNA"/>
</dbReference>
<dbReference type="RefSeq" id="NP_038349.2">
    <property type="nucleotide sequence ID" value="NC_002186.1"/>
</dbReference>
<dbReference type="SMR" id="Q9MUW1"/>
<dbReference type="GeneID" id="800955"/>
<dbReference type="GO" id="GO:0009535">
    <property type="term" value="C:chloroplast thylakoid membrane"/>
    <property type="evidence" value="ECO:0007669"/>
    <property type="project" value="UniProtKB-SubCell"/>
</dbReference>
<dbReference type="GO" id="GO:0009523">
    <property type="term" value="C:photosystem II"/>
    <property type="evidence" value="ECO:0007669"/>
    <property type="project" value="UniProtKB-KW"/>
</dbReference>
<dbReference type="GO" id="GO:0016168">
    <property type="term" value="F:chlorophyll binding"/>
    <property type="evidence" value="ECO:0007669"/>
    <property type="project" value="UniProtKB-UniRule"/>
</dbReference>
<dbReference type="GO" id="GO:0045156">
    <property type="term" value="F:electron transporter, transferring electrons within the cyclic electron transport pathway of photosynthesis activity"/>
    <property type="evidence" value="ECO:0007669"/>
    <property type="project" value="InterPro"/>
</dbReference>
<dbReference type="GO" id="GO:0046872">
    <property type="term" value="F:metal ion binding"/>
    <property type="evidence" value="ECO:0007669"/>
    <property type="project" value="UniProtKB-KW"/>
</dbReference>
<dbReference type="GO" id="GO:0009772">
    <property type="term" value="P:photosynthetic electron transport in photosystem II"/>
    <property type="evidence" value="ECO:0007669"/>
    <property type="project" value="InterPro"/>
</dbReference>
<dbReference type="FunFam" id="1.10.10.670:FF:000001">
    <property type="entry name" value="Photosystem II CP43 reaction center protein"/>
    <property type="match status" value="1"/>
</dbReference>
<dbReference type="Gene3D" id="1.10.10.670">
    <property type="entry name" value="photosystem ii from thermosynechococcus elongatus"/>
    <property type="match status" value="1"/>
</dbReference>
<dbReference type="HAMAP" id="MF_01496">
    <property type="entry name" value="PSII_PsbC_CP43"/>
    <property type="match status" value="1"/>
</dbReference>
<dbReference type="InterPro" id="IPR000932">
    <property type="entry name" value="PS_antenna-like"/>
</dbReference>
<dbReference type="InterPro" id="IPR036001">
    <property type="entry name" value="PS_II_antenna-like_sf"/>
</dbReference>
<dbReference type="InterPro" id="IPR005869">
    <property type="entry name" value="PSII_PsbC"/>
</dbReference>
<dbReference type="InterPro" id="IPR044900">
    <property type="entry name" value="PSII_PsbC_sf"/>
</dbReference>
<dbReference type="NCBIfam" id="TIGR01153">
    <property type="entry name" value="psbC"/>
    <property type="match status" value="1"/>
</dbReference>
<dbReference type="Pfam" id="PF00421">
    <property type="entry name" value="PSII"/>
    <property type="match status" value="1"/>
</dbReference>
<dbReference type="SUPFAM" id="SSF161077">
    <property type="entry name" value="Photosystem II antenna protein-like"/>
    <property type="match status" value="1"/>
</dbReference>
<feature type="propeptide" id="PRO_0000431166" evidence="1">
    <location>
        <begin position="1"/>
        <end position="14"/>
    </location>
</feature>
<feature type="chain" id="PRO_0000077520" description="Photosystem II CP43 reaction center protein" evidence="1">
    <location>
        <begin position="15"/>
        <end position="473"/>
    </location>
</feature>
<feature type="transmembrane region" description="Helical" evidence="1">
    <location>
        <begin position="69"/>
        <end position="93"/>
    </location>
</feature>
<feature type="transmembrane region" description="Helical" evidence="1">
    <location>
        <begin position="134"/>
        <end position="155"/>
    </location>
</feature>
<feature type="transmembrane region" description="Helical" evidence="1">
    <location>
        <begin position="178"/>
        <end position="200"/>
    </location>
</feature>
<feature type="transmembrane region" description="Helical" evidence="1">
    <location>
        <begin position="255"/>
        <end position="275"/>
    </location>
</feature>
<feature type="transmembrane region" description="Helical" evidence="1">
    <location>
        <begin position="291"/>
        <end position="312"/>
    </location>
</feature>
<feature type="transmembrane region" description="Helical" evidence="1">
    <location>
        <begin position="447"/>
        <end position="471"/>
    </location>
</feature>
<feature type="binding site" evidence="1">
    <location>
        <position position="367"/>
    </location>
    <ligand>
        <name>[CaMn4O5] cluster</name>
        <dbReference type="ChEBI" id="CHEBI:189552"/>
    </ligand>
</feature>
<feature type="modified residue" description="N-acetylthreonine" evidence="1">
    <location>
        <position position="15"/>
    </location>
</feature>
<feature type="modified residue" description="Phosphothreonine" evidence="1">
    <location>
        <position position="15"/>
    </location>
</feature>
<proteinExistence type="inferred from homology"/>
<sequence>MKTLYSLRRFYHVETLFNGTLSISGRDQESTGFAWWSGNARLINLSGKLLGAHVAHAGLIVFWAGAMNLFEVAHFTPEKPMYEQGLILLPHLATLGWGVGPGGEVIDTFPYFVSGVLHLISSAVLGFGGVYHSLIGPETLEESFPFFGYVWKDKNKMTTILGIHLIVLGVGAYLLVWKACYFGGVYDTWAPGGGDVRIITDPTLSPAVIFGYLLKSPFGGEGWICSVDNMEDVIGGHIWIGNLLIFGGIWHILTKPWAWARRAFVWSGEAYLSYSLGAIATMGWIACCFSWFNNTAYPSEFYGPTGPEASQAQAFTFLVRDQRLGANIASSQGPTGLGKYLMRSPSGEIIFGGETMRFWDCRAPWIEPLRGPNGLDLNKLKNDIQPWQERRSAEYMTHAPLGSLNSVGGVATEINAVNFVSPRSWLATSHFTLAFFFFVGHLWHAGRARAAAAGFEKGIERETEPVLFMKPLD</sequence>
<keyword id="KW-0007">Acetylation</keyword>
<keyword id="KW-0148">Chlorophyll</keyword>
<keyword id="KW-0150">Chloroplast</keyword>
<keyword id="KW-0157">Chromophore</keyword>
<keyword id="KW-0464">Manganese</keyword>
<keyword id="KW-0472">Membrane</keyword>
<keyword id="KW-0479">Metal-binding</keyword>
<keyword id="KW-0597">Phosphoprotein</keyword>
<keyword id="KW-0602">Photosynthesis</keyword>
<keyword id="KW-0604">Photosystem II</keyword>
<keyword id="KW-0934">Plastid</keyword>
<keyword id="KW-0793">Thylakoid</keyword>
<keyword id="KW-0812">Transmembrane</keyword>
<keyword id="KW-1133">Transmembrane helix</keyword>
<comment type="function">
    <text evidence="1">One of the components of the core complex of photosystem II (PSII). It binds chlorophyll and helps catalyze the primary light-induced photochemical processes of PSII. PSII is a light-driven water:plastoquinone oxidoreductase, using light energy to abstract electrons from H(2)O, generating O(2) and a proton gradient subsequently used for ATP formation.</text>
</comment>
<comment type="cofactor">
    <text evidence="1">Binds multiple chlorophylls and provides some of the ligands for the Ca-4Mn-5O cluster of the oxygen-evolving complex. It may also provide a ligand for a Cl- that is required for oxygen evolution. PSII binds additional chlorophylls, carotenoids and specific lipids.</text>
</comment>
<comment type="subunit">
    <text evidence="1">PSII is composed of 1 copy each of membrane proteins PsbA, PsbB, PsbC, PsbD, PsbE, PsbF, PsbH, PsbI, PsbJ, PsbK, PsbL, PsbM, PsbT, PsbX, PsbY, PsbZ, Psb30/Ycf12, at least 3 peripheral proteins of the oxygen-evolving complex and a large number of cofactors. It forms dimeric complexes.</text>
</comment>
<comment type="subcellular location">
    <subcellularLocation>
        <location evidence="1">Plastid</location>
        <location evidence="1">Chloroplast thylakoid membrane</location>
        <topology evidence="1">Multi-pass membrane protein</topology>
    </subcellularLocation>
</comment>
<comment type="similarity">
    <text evidence="1">Belongs to the PsbB/PsbC family. PsbC subfamily.</text>
</comment>
<evidence type="ECO:0000255" key="1">
    <source>
        <dbReference type="HAMAP-Rule" id="MF_01496"/>
    </source>
</evidence>
<protein>
    <recommendedName>
        <fullName evidence="1">Photosystem II CP43 reaction center protein</fullName>
    </recommendedName>
    <alternativeName>
        <fullName evidence="1">PSII 43 kDa protein</fullName>
    </alternativeName>
    <alternativeName>
        <fullName evidence="1">Protein CP-43</fullName>
    </alternativeName>
</protein>
<accession>Q9MUW1</accession>
<gene>
    <name evidence="1" type="primary">psbC</name>
</gene>
<reference key="1">
    <citation type="journal article" date="2000" name="Nature">
        <title>Ancestral chloroplast genome in Mesostigma viride reveals an early branch of green plant evolution.</title>
        <authorList>
            <person name="Lemieux C."/>
            <person name="Otis C."/>
            <person name="Turmel M."/>
        </authorList>
    </citation>
    <scope>NUCLEOTIDE SEQUENCE [LARGE SCALE GENOMIC DNA]</scope>
    <source>
        <strain>NIES-296 / KY-14 / CCMP 2046</strain>
    </source>
</reference>
<organism>
    <name type="scientific">Mesostigma viride</name>
    <name type="common">Green alga</name>
    <dbReference type="NCBI Taxonomy" id="41882"/>
    <lineage>
        <taxon>Eukaryota</taxon>
        <taxon>Viridiplantae</taxon>
        <taxon>Streptophyta</taxon>
        <taxon>Mesostigmatophyceae</taxon>
        <taxon>Mesostigmatales</taxon>
        <taxon>Mesostigmataceae</taxon>
        <taxon>Mesostigma</taxon>
    </lineage>
</organism>
<geneLocation type="chloroplast"/>
<name>PSBC_MESVI</name>